<proteinExistence type="evidence at protein level"/>
<name>JBP1_TRYB2</name>
<feature type="chain" id="PRO_0000377555" description="Thymine dioxygenase JBP1">
    <location>
        <begin position="1"/>
        <end position="839"/>
    </location>
</feature>
<feature type="region of interest" description="Thymine dioxygenase" evidence="2">
    <location>
        <begin position="86"/>
        <end position="288"/>
    </location>
</feature>
<feature type="region of interest" description="DNA-binding JBP1 domain" evidence="2">
    <location>
        <begin position="415"/>
        <end position="583"/>
    </location>
</feature>
<feature type="binding site" evidence="5">
    <location>
        <position position="213"/>
    </location>
    <ligand>
        <name>Fe cation</name>
        <dbReference type="ChEBI" id="CHEBI:24875"/>
        <note>catalytic</note>
    </ligand>
</feature>
<feature type="binding site" evidence="5">
    <location>
        <position position="215"/>
    </location>
    <ligand>
        <name>Fe cation</name>
        <dbReference type="ChEBI" id="CHEBI:24875"/>
        <note>catalytic</note>
    </ligand>
</feature>
<feature type="binding site" evidence="1">
    <location>
        <position position="263"/>
    </location>
    <ligand>
        <name>Fe cation</name>
        <dbReference type="ChEBI" id="CHEBI:24875"/>
        <note>catalytic</note>
    </ligand>
</feature>
<feature type="binding site" evidence="1">
    <location>
        <position position="279"/>
    </location>
    <ligand>
        <name>2-oxoglutarate</name>
        <dbReference type="ChEBI" id="CHEBI:16810"/>
    </ligand>
</feature>
<feature type="site" description="Involved in J base recognition, conferring specificity towards J-DNA" evidence="2">
    <location>
        <position position="548"/>
    </location>
</feature>
<feature type="mutagenesis site" description="Impairs DNA base J biosynthesis." evidence="5">
    <original>H</original>
    <variation>S</variation>
    <location>
        <position position="213"/>
    </location>
</feature>
<feature type="mutagenesis site" description="Impairs DNA base J biosynthesis." evidence="5">
    <original>D</original>
    <variation>S</variation>
    <location>
        <position position="215"/>
    </location>
</feature>
<sequence>MRRQVKKVLREKADDSMKPGWDVYQPSNDVVYAFNHYMQGSQIDAEAREKAEKAFQEAVKKHPFHNNADHTVDFHGTTVFRNAKGKVCGVLIPKALPSFATSMAADVLECAVARTSLRSALFGGVSPNSGIAGYFDYRGTPVELKCRKTSFTYEHTKEWRSVFPMIDYTSAIYKAALPDHWKAQDAAVPDVVRIHGSPFSTLTVNERFRTASHTDNGDFDNGYGVLAVLKGEYSGLSLALDDYGVCFNMQPTDVLLFDTHLFHSNTELEAKEANATWNRLSCVFYYRAALGEQPCVEEYRRRLKKAKEEKSTSLSFNHIEQKDNGENTNKPAPVYPVSLTPFSCAASAWALRGCAAAMLTRLHGLVRENASLMTELFGEPVEVADGLPRRAPEEIIPVHKHTNVQMHYLGGFSEKGDILNEAMNKRHYLDKENLQKMFGEEFVNIWTQSRTHWLQLVKKEWEHQKETNPTRTRFSWNNTSAMNFAFFDLCDVAKQLMCGAFGDREVNKKEEQSFWGMFAAHLDNACINEIGMLQGSMGMHKLNVKLKDYNFGGTRYLKDMPPEEQERRRRRRLEIEQARRRAPICDSESGDWLRNEAFDYQTEDVAVNYEREQWITPENNAKRFGFPERGVYGAEGAATGTISVLIVLPKPTNHRQKTCELPTSREADRIMKNPAAQRLLCAKPCNIGLSTSSNKSRTVLCGNIRIDKVFDGGSVGGKMYDFVIMRHLLAATTGEREPLECLVRWTSLARYCTFVVEVDLLDRHHYILKSEIGEEYSAVSEICFSALYSATYARDKVNLRTTPCLLSFIDKSGNMLESRFKFNGSPLNTVAFVVRRREK</sequence>
<comment type="function">
    <text evidence="4 5">Dioxygenase that catalyzes the first step of DNA base J (beta-d-glucosyl-HOMedU) biosynthesis by converting thymine to 5-hydroxymethyluracil (HOMedU). DNA base J is a hypermodified thymidine residue found in the genome of kinetoplastid parasites, which is localized primarily to repetitive DNA, namely the telomeres, and is implicated in the regulation of antigenic variation. Also specifically binds to base J-containing DNA (J-DNA). Involved in propagation and maintenance of DNA base J synthesis initiated by JBP2 by specifically binding already synthesized DNA base J and propagating J synthesis. Thymine dioxygenase activity and J-DNA-binding are independent functions.</text>
</comment>
<comment type="catalytic activity">
    <reaction evidence="8 9">
        <text>thymine + 2-oxoglutarate + O2 = 5-hydroxymethyluracil + succinate + CO2</text>
        <dbReference type="Rhea" id="RHEA:10316"/>
        <dbReference type="ChEBI" id="CHEBI:15379"/>
        <dbReference type="ChEBI" id="CHEBI:16526"/>
        <dbReference type="ChEBI" id="CHEBI:16810"/>
        <dbReference type="ChEBI" id="CHEBI:16964"/>
        <dbReference type="ChEBI" id="CHEBI:17821"/>
        <dbReference type="ChEBI" id="CHEBI:30031"/>
        <dbReference type="EC" id="1.14.11.6"/>
    </reaction>
</comment>
<comment type="cofactor">
    <cofactor evidence="1">
        <name>Fe(2+)</name>
        <dbReference type="ChEBI" id="CHEBI:29033"/>
    </cofactor>
    <text evidence="1">Binds 1 Fe(2+) ion per subunit.</text>
</comment>
<comment type="subunit">
    <text evidence="2">Monomer. Binds to DNA as a monomer (By similarity).</text>
</comment>
<comment type="subcellular location">
    <subcellularLocation>
        <location evidence="4 5">Nucleus</location>
    </subcellularLocation>
</comment>
<comment type="developmental stage">
    <text evidence="4">Expressed in bloodstream form and significantly less in procyclic form.</text>
</comment>
<comment type="domain">
    <text evidence="2">The DNA-binding JBP1 domain (DB-JBP1) is necessary and sufficient for binding to J-DNA.</text>
</comment>
<comment type="disruption phenotype">
    <text evidence="3 6">Does not affect growth, gene expression or the stability of some repetitive DNA sequences. The genome contains only about 5% of the wild-type level of J in their DNA. Cells lacking both JBP1 and JBP2 show a complete absence of base J.</text>
</comment>
<comment type="similarity">
    <text evidence="7">Belongs to the TET family. JBP1 subfamily.</text>
</comment>
<dbReference type="EC" id="1.14.11.6" evidence="8 9"/>
<dbReference type="EMBL" id="CH464491">
    <property type="protein sequence ID" value="EAN80308.1"/>
    <property type="molecule type" value="Genomic_DNA"/>
</dbReference>
<dbReference type="RefSeq" id="XP_829420.1">
    <property type="nucleotide sequence ID" value="XM_824327.1"/>
</dbReference>
<dbReference type="SMR" id="P86938"/>
<dbReference type="STRING" id="185431.P86938"/>
<dbReference type="PaxDb" id="5691-EAN80308"/>
<dbReference type="GeneID" id="3665128"/>
<dbReference type="KEGG" id="tbr:Tb11.01.5220"/>
<dbReference type="VEuPathDB" id="TriTrypDB:Tb927.11.13640"/>
<dbReference type="eggNOG" id="ENOG502RTYX">
    <property type="taxonomic scope" value="Eukaryota"/>
</dbReference>
<dbReference type="InParanoid" id="P86938"/>
<dbReference type="OrthoDB" id="275889at2759"/>
<dbReference type="Proteomes" id="UP000008524">
    <property type="component" value="Chromosome 11 Scaffold 1"/>
</dbReference>
<dbReference type="GO" id="GO:0005634">
    <property type="term" value="C:nucleus"/>
    <property type="evidence" value="ECO:0000314"/>
    <property type="project" value="GeneDB"/>
</dbReference>
<dbReference type="GO" id="GO:0003677">
    <property type="term" value="F:DNA binding"/>
    <property type="evidence" value="ECO:0000314"/>
    <property type="project" value="GeneDB"/>
</dbReference>
<dbReference type="GO" id="GO:0015616">
    <property type="term" value="F:DNA translocase activity"/>
    <property type="evidence" value="ECO:0000318"/>
    <property type="project" value="GO_Central"/>
</dbReference>
<dbReference type="GO" id="GO:0008198">
    <property type="term" value="F:ferrous iron binding"/>
    <property type="evidence" value="ECO:0000315"/>
    <property type="project" value="GeneDB"/>
</dbReference>
<dbReference type="GO" id="GO:0050341">
    <property type="term" value="F:thymine dioxygenase activity"/>
    <property type="evidence" value="ECO:0000266"/>
    <property type="project" value="GeneDB"/>
</dbReference>
<dbReference type="GO" id="GO:0070580">
    <property type="term" value="P:base J metabolic process"/>
    <property type="evidence" value="ECO:0000315"/>
    <property type="project" value="GeneDB"/>
</dbReference>
<dbReference type="GO" id="GO:0006281">
    <property type="term" value="P:DNA repair"/>
    <property type="evidence" value="ECO:0000318"/>
    <property type="project" value="GO_Central"/>
</dbReference>
<dbReference type="CDD" id="cd20332">
    <property type="entry name" value="JBP"/>
    <property type="match status" value="1"/>
</dbReference>
<dbReference type="Gene3D" id="3.60.130.30">
    <property type="match status" value="1"/>
</dbReference>
<dbReference type="Gene3D" id="1.20.120.1440">
    <property type="entry name" value="JBP1, DNA-binding domain"/>
    <property type="match status" value="1"/>
</dbReference>
<dbReference type="InterPro" id="IPR024779">
    <property type="entry name" value="2OGFeDO_JBP1/TET_oxygenase_dom"/>
</dbReference>
<dbReference type="InterPro" id="IPR041241">
    <property type="entry name" value="DB_JBP1"/>
</dbReference>
<dbReference type="InterPro" id="IPR043111">
    <property type="entry name" value="DB_JBP1_sf"/>
</dbReference>
<dbReference type="Pfam" id="PF18526">
    <property type="entry name" value="DB_JBP1"/>
    <property type="match status" value="1"/>
</dbReference>
<dbReference type="Pfam" id="PF12851">
    <property type="entry name" value="Tet_JBP"/>
    <property type="match status" value="1"/>
</dbReference>
<accession>P86938</accession>
<accession>Q382H3</accession>
<accession>Q9U6M3</accession>
<evidence type="ECO:0000250" key="1">
    <source>
        <dbReference type="UniProtKB" id="Q6N021"/>
    </source>
</evidence>
<evidence type="ECO:0000250" key="2">
    <source>
        <dbReference type="UniProtKB" id="Q9U6M1"/>
    </source>
</evidence>
<evidence type="ECO:0000269" key="3">
    <source>
    </source>
</evidence>
<evidence type="ECO:0000269" key="4">
    <source>
    </source>
</evidence>
<evidence type="ECO:0000269" key="5">
    <source>
    </source>
</evidence>
<evidence type="ECO:0000269" key="6">
    <source>
    </source>
</evidence>
<evidence type="ECO:0000305" key="7"/>
<evidence type="ECO:0000305" key="8">
    <source>
    </source>
</evidence>
<evidence type="ECO:0000305" key="9">
    <source>
    </source>
</evidence>
<evidence type="ECO:0000312" key="10">
    <source>
        <dbReference type="Proteomes" id="UP000008524"/>
    </source>
</evidence>
<protein>
    <recommendedName>
        <fullName>Thymine dioxygenase JBP1</fullName>
        <ecNumber evidence="8 9">1.14.11.6</ecNumber>
    </recommendedName>
    <alternativeName>
        <fullName>J-binding protein 1</fullName>
    </alternativeName>
    <alternativeName>
        <fullName>Thymidine hydroxylase JBP1</fullName>
    </alternativeName>
</protein>
<organism>
    <name type="scientific">Trypanosoma brucei brucei (strain 927/4 GUTat10.1)</name>
    <dbReference type="NCBI Taxonomy" id="185431"/>
    <lineage>
        <taxon>Eukaryota</taxon>
        <taxon>Discoba</taxon>
        <taxon>Euglenozoa</taxon>
        <taxon>Kinetoplastea</taxon>
        <taxon>Metakinetoplastina</taxon>
        <taxon>Trypanosomatida</taxon>
        <taxon>Trypanosomatidae</taxon>
        <taxon>Trypanosoma</taxon>
    </lineage>
</organism>
<gene>
    <name type="primary">JBP1</name>
    <name type="ORF">Tb11.01.5220</name>
</gene>
<keyword id="KW-0223">Dioxygenase</keyword>
<keyword id="KW-0238">DNA-binding</keyword>
<keyword id="KW-0408">Iron</keyword>
<keyword id="KW-0479">Metal-binding</keyword>
<keyword id="KW-0539">Nucleus</keyword>
<keyword id="KW-0560">Oxidoreductase</keyword>
<keyword id="KW-1185">Reference proteome</keyword>
<reference key="1">
    <citation type="journal article" date="2005" name="Science">
        <title>The genome of the African trypanosome Trypanosoma brucei.</title>
        <authorList>
            <person name="Berriman M."/>
            <person name="Ghedin E."/>
            <person name="Hertz-Fowler C."/>
            <person name="Blandin G."/>
            <person name="Renauld H."/>
            <person name="Bartholomeu D.C."/>
            <person name="Lennard N.J."/>
            <person name="Caler E."/>
            <person name="Hamlin N.E."/>
            <person name="Haas B."/>
            <person name="Bohme U."/>
            <person name="Hannick L."/>
            <person name="Aslett M.A."/>
            <person name="Shallom J."/>
            <person name="Marcello L."/>
            <person name="Hou L."/>
            <person name="Wickstead B."/>
            <person name="Alsmark U.C.M."/>
            <person name="Arrowsmith C."/>
            <person name="Atkin R.J."/>
            <person name="Barron A.J."/>
            <person name="Bringaud F."/>
            <person name="Brooks K."/>
            <person name="Carrington M."/>
            <person name="Cherevach I."/>
            <person name="Chillingworth T.J."/>
            <person name="Churcher C."/>
            <person name="Clark L.N."/>
            <person name="Corton C.H."/>
            <person name="Cronin A."/>
            <person name="Davies R.M."/>
            <person name="Doggett J."/>
            <person name="Djikeng A."/>
            <person name="Feldblyum T."/>
            <person name="Field M.C."/>
            <person name="Fraser A."/>
            <person name="Goodhead I."/>
            <person name="Hance Z."/>
            <person name="Harper D."/>
            <person name="Harris B.R."/>
            <person name="Hauser H."/>
            <person name="Hostetler J."/>
            <person name="Ivens A."/>
            <person name="Jagels K."/>
            <person name="Johnson D."/>
            <person name="Johnson J."/>
            <person name="Jones K."/>
            <person name="Kerhornou A.X."/>
            <person name="Koo H."/>
            <person name="Larke N."/>
            <person name="Landfear S."/>
            <person name="Larkin C."/>
            <person name="Leech V."/>
            <person name="Line A."/>
            <person name="Lord A."/>
            <person name="Macleod A."/>
            <person name="Mooney P.J."/>
            <person name="Moule S."/>
            <person name="Martin D.M."/>
            <person name="Morgan G.W."/>
            <person name="Mungall K."/>
            <person name="Norbertczak H."/>
            <person name="Ormond D."/>
            <person name="Pai G."/>
            <person name="Peacock C.S."/>
            <person name="Peterson J."/>
            <person name="Quail M.A."/>
            <person name="Rabbinowitsch E."/>
            <person name="Rajandream M.A."/>
            <person name="Reitter C."/>
            <person name="Salzberg S.L."/>
            <person name="Sanders M."/>
            <person name="Schobel S."/>
            <person name="Sharp S."/>
            <person name="Simmonds M."/>
            <person name="Simpson A.J."/>
            <person name="Tallon L."/>
            <person name="Turner C.M."/>
            <person name="Tait A."/>
            <person name="Tivey A.R."/>
            <person name="Van Aken S."/>
            <person name="Walker D."/>
            <person name="Wanless D."/>
            <person name="Wang S."/>
            <person name="White B."/>
            <person name="White O."/>
            <person name="Whitehead S."/>
            <person name="Woodward J."/>
            <person name="Wortman J."/>
            <person name="Adams M.D."/>
            <person name="Embley T.M."/>
            <person name="Gull K."/>
            <person name="Ullu E."/>
            <person name="Barry J.D."/>
            <person name="Fairlamb A.H."/>
            <person name="Opperdoes F."/>
            <person name="Barrell B.G."/>
            <person name="Donelson J.E."/>
            <person name="Hall N."/>
            <person name="Fraser C.M."/>
            <person name="Melville S.E."/>
            <person name="El-Sayed N.M.A."/>
        </authorList>
    </citation>
    <scope>NUCLEOTIDE SEQUENCE [LARGE SCALE GENOMIC DNA]</scope>
    <source>
        <strain evidence="10">927/4 GUTat10.1</strain>
    </source>
</reference>
<reference key="2">
    <citation type="journal article" date="2002" name="Mol. Microbiol.">
        <title>J-binding protein increases the level and retention of the unusual base J in trypanosome DNA.</title>
        <authorList>
            <person name="Cross M."/>
            <person name="Kieft R."/>
            <person name="Sabatini R."/>
            <person name="Dirks-Mulder A."/>
            <person name="Chaves I."/>
            <person name="Borst P."/>
        </authorList>
    </citation>
    <scope>DISRUPTION PHENOTYPE</scope>
</reference>
<reference key="3">
    <citation type="journal article" date="2005" name="Mol. Cell">
        <title>Regulation of trypanosome DNA glycosylation by a SWI2/SNF2-like protein.</title>
        <authorList>
            <person name="DiPaolo C."/>
            <person name="Kieft R."/>
            <person name="Cross M."/>
            <person name="Sabatini R."/>
        </authorList>
    </citation>
    <scope>FUNCTION</scope>
    <scope>SUBCELLULAR LOCATION</scope>
    <scope>DOMAIN</scope>
    <scope>DEVELOPMENTAL STAGE</scope>
    <source>
        <strain>29-13</strain>
        <strain>427</strain>
    </source>
</reference>
<reference key="4">
    <citation type="journal article" date="2007" name="Nucleic Acids Res.">
        <title>The protein that binds to DNA base J in trypanosomatids has features of a thymidine hydroxylase.</title>
        <authorList>
            <person name="Yu Z."/>
            <person name="Genest P.-A."/>
            <person name="ter Riet B."/>
            <person name="Sweeney K."/>
            <person name="DiPaolo C."/>
            <person name="Kieft R."/>
            <person name="Christodoulou E."/>
            <person name="Perrakis A."/>
            <person name="Simmons J.M."/>
            <person name="Hausinger R.P."/>
            <person name="van Luenen H.G.A.M."/>
            <person name="Rigden D.J."/>
            <person name="Sabatini R."/>
            <person name="Borst P."/>
        </authorList>
    </citation>
    <scope>FUNCTION</scope>
    <scope>SUBCELLULAR LOCATION</scope>
    <scope>MUTAGENESIS OF HIS-213 AND ASP-215</scope>
</reference>
<reference key="5">
    <citation type="journal article" date="2009" name="Nucleic Acids Res.">
        <title>JBP1 and JBP2 are two distinct thymidine hydroxylases involved in J biosynthesis in genomic DNA of African trypanosomes.</title>
        <authorList>
            <person name="Cliffe L.J."/>
            <person name="Kieft R."/>
            <person name="Southern T."/>
            <person name="Birkeland S.R."/>
            <person name="Marshall M."/>
            <person name="Sweeney K."/>
            <person name="Sabatini R."/>
        </authorList>
    </citation>
    <scope>DISRUPTION PHENOTYPE</scope>
    <source>
        <strain>29-13</strain>
        <strain>427</strain>
    </source>
</reference>